<keyword id="KW-0240">DNA-directed RNA polymerase</keyword>
<keyword id="KW-0548">Nucleotidyltransferase</keyword>
<keyword id="KW-1185">Reference proteome</keyword>
<keyword id="KW-0804">Transcription</keyword>
<keyword id="KW-0808">Transferase</keyword>
<gene>
    <name evidence="1" type="primary">rpoZ</name>
    <name type="ordered locus">BCI_0111</name>
</gene>
<reference key="1">
    <citation type="journal article" date="2006" name="PLoS Biol.">
        <title>Metabolic complementarity and genomics of the dual bacterial symbiosis of sharpshooters.</title>
        <authorList>
            <person name="Wu D."/>
            <person name="Daugherty S.C."/>
            <person name="Van Aken S.E."/>
            <person name="Pai G.H."/>
            <person name="Watkins K.L."/>
            <person name="Khouri H."/>
            <person name="Tallon L.J."/>
            <person name="Zaborsky J.M."/>
            <person name="Dunbar H.E."/>
            <person name="Tran P.L."/>
            <person name="Moran N.A."/>
            <person name="Eisen J.A."/>
        </authorList>
    </citation>
    <scope>NUCLEOTIDE SEQUENCE [LARGE SCALE GENOMIC DNA]</scope>
</reference>
<feature type="chain" id="PRO_1000005891" description="DNA-directed RNA polymerase subunit omega">
    <location>
        <begin position="1"/>
        <end position="65"/>
    </location>
</feature>
<dbReference type="EC" id="2.7.7.6" evidence="1"/>
<dbReference type="EMBL" id="CP000238">
    <property type="protein sequence ID" value="ABF13867.1"/>
    <property type="molecule type" value="Genomic_DNA"/>
</dbReference>
<dbReference type="SMR" id="Q1LTY2"/>
<dbReference type="STRING" id="374463.BCI_0111"/>
<dbReference type="KEGG" id="bci:BCI_0111"/>
<dbReference type="HOGENOM" id="CLU_125406_5_2_6"/>
<dbReference type="OrthoDB" id="9796300at2"/>
<dbReference type="Proteomes" id="UP000002427">
    <property type="component" value="Chromosome"/>
</dbReference>
<dbReference type="GO" id="GO:0000428">
    <property type="term" value="C:DNA-directed RNA polymerase complex"/>
    <property type="evidence" value="ECO:0007669"/>
    <property type="project" value="UniProtKB-KW"/>
</dbReference>
<dbReference type="GO" id="GO:0003677">
    <property type="term" value="F:DNA binding"/>
    <property type="evidence" value="ECO:0007669"/>
    <property type="project" value="UniProtKB-UniRule"/>
</dbReference>
<dbReference type="GO" id="GO:0003899">
    <property type="term" value="F:DNA-directed RNA polymerase activity"/>
    <property type="evidence" value="ECO:0007669"/>
    <property type="project" value="UniProtKB-UniRule"/>
</dbReference>
<dbReference type="GO" id="GO:0006351">
    <property type="term" value="P:DNA-templated transcription"/>
    <property type="evidence" value="ECO:0007669"/>
    <property type="project" value="UniProtKB-UniRule"/>
</dbReference>
<dbReference type="Gene3D" id="3.90.940.10">
    <property type="match status" value="1"/>
</dbReference>
<dbReference type="HAMAP" id="MF_00366">
    <property type="entry name" value="RNApol_bact_RpoZ"/>
    <property type="match status" value="1"/>
</dbReference>
<dbReference type="InterPro" id="IPR003716">
    <property type="entry name" value="DNA-dir_RNA_pol_omega"/>
</dbReference>
<dbReference type="InterPro" id="IPR006110">
    <property type="entry name" value="Pol_omega/Rpo6/RPB6"/>
</dbReference>
<dbReference type="InterPro" id="IPR036161">
    <property type="entry name" value="RPB6/omega-like_sf"/>
</dbReference>
<dbReference type="NCBIfam" id="TIGR00690">
    <property type="entry name" value="rpoZ"/>
    <property type="match status" value="1"/>
</dbReference>
<dbReference type="PANTHER" id="PTHR34476">
    <property type="entry name" value="DNA-DIRECTED RNA POLYMERASE SUBUNIT OMEGA"/>
    <property type="match status" value="1"/>
</dbReference>
<dbReference type="PANTHER" id="PTHR34476:SF1">
    <property type="entry name" value="DNA-DIRECTED RNA POLYMERASE SUBUNIT OMEGA"/>
    <property type="match status" value="1"/>
</dbReference>
<dbReference type="Pfam" id="PF01192">
    <property type="entry name" value="RNA_pol_Rpb6"/>
    <property type="match status" value="1"/>
</dbReference>
<dbReference type="SMART" id="SM01409">
    <property type="entry name" value="RNA_pol_Rpb6"/>
    <property type="match status" value="1"/>
</dbReference>
<dbReference type="SUPFAM" id="SSF63562">
    <property type="entry name" value="RPB6/omega subunit-like"/>
    <property type="match status" value="1"/>
</dbReference>
<organism>
    <name type="scientific">Baumannia cicadellinicola subsp. Homalodisca coagulata</name>
    <dbReference type="NCBI Taxonomy" id="374463"/>
    <lineage>
        <taxon>Bacteria</taxon>
        <taxon>Pseudomonadati</taxon>
        <taxon>Pseudomonadota</taxon>
        <taxon>Gammaproteobacteria</taxon>
        <taxon>Candidatus Palibaumannia</taxon>
    </lineage>
</organism>
<accession>Q1LTY2</accession>
<evidence type="ECO:0000255" key="1">
    <source>
        <dbReference type="HAMAP-Rule" id="MF_00366"/>
    </source>
</evidence>
<sequence length="65" mass="7265">MARITVQDAVEKIGNRFNLVLIAARRARQIQINGKDPLVPEKNDKSTVIALREIEQGLIGNQIID</sequence>
<protein>
    <recommendedName>
        <fullName evidence="1">DNA-directed RNA polymerase subunit omega</fullName>
        <shortName evidence="1">RNAP omega subunit</shortName>
        <ecNumber evidence="1">2.7.7.6</ecNumber>
    </recommendedName>
    <alternativeName>
        <fullName evidence="1">RNA polymerase omega subunit</fullName>
    </alternativeName>
    <alternativeName>
        <fullName evidence="1">Transcriptase subunit omega</fullName>
    </alternativeName>
</protein>
<name>RPOZ_BAUCH</name>
<proteinExistence type="inferred from homology"/>
<comment type="function">
    <text evidence="1">Promotes RNA polymerase assembly. Latches the N- and C-terminal regions of the beta' subunit thereby facilitating its interaction with the beta and alpha subunits.</text>
</comment>
<comment type="catalytic activity">
    <reaction evidence="1">
        <text>RNA(n) + a ribonucleoside 5'-triphosphate = RNA(n+1) + diphosphate</text>
        <dbReference type="Rhea" id="RHEA:21248"/>
        <dbReference type="Rhea" id="RHEA-COMP:14527"/>
        <dbReference type="Rhea" id="RHEA-COMP:17342"/>
        <dbReference type="ChEBI" id="CHEBI:33019"/>
        <dbReference type="ChEBI" id="CHEBI:61557"/>
        <dbReference type="ChEBI" id="CHEBI:140395"/>
        <dbReference type="EC" id="2.7.7.6"/>
    </reaction>
</comment>
<comment type="subunit">
    <text evidence="1">The RNAP catalytic core consists of 2 alpha, 1 beta, 1 beta' and 1 omega subunit. When a sigma factor is associated with the core the holoenzyme is formed, which can initiate transcription.</text>
</comment>
<comment type="similarity">
    <text evidence="1">Belongs to the RNA polymerase subunit omega family.</text>
</comment>